<dbReference type="EMBL" id="L42023">
    <property type="protein sequence ID" value="AAC22707.1"/>
    <property type="molecule type" value="Genomic_DNA"/>
</dbReference>
<dbReference type="PIR" id="H64109">
    <property type="entry name" value="H64109"/>
</dbReference>
<dbReference type="RefSeq" id="NP_439208.1">
    <property type="nucleotide sequence ID" value="NC_000907.1"/>
</dbReference>
<dbReference type="STRING" id="71421.HI_1049"/>
<dbReference type="TCDB" id="1.A.72.1.3">
    <property type="family name" value="the mercuric ion pore (mer) superfamily"/>
</dbReference>
<dbReference type="EnsemblBacteria" id="AAC22707">
    <property type="protein sequence ID" value="AAC22707"/>
    <property type="gene ID" value="HI_1049"/>
</dbReference>
<dbReference type="KEGG" id="hin:HI_1049"/>
<dbReference type="PATRIC" id="fig|71421.8.peg.1094"/>
<dbReference type="eggNOG" id="ENOG50332GU">
    <property type="taxonomic scope" value="Bacteria"/>
</dbReference>
<dbReference type="HOGENOM" id="CLU_175356_0_0_6"/>
<dbReference type="OrthoDB" id="6497167at2"/>
<dbReference type="BioCyc" id="HINF71421:G1GJ1-1088-MONOMER"/>
<dbReference type="Proteomes" id="UP000000579">
    <property type="component" value="Chromosome"/>
</dbReference>
<dbReference type="GO" id="GO:0005886">
    <property type="term" value="C:plasma membrane"/>
    <property type="evidence" value="ECO:0007669"/>
    <property type="project" value="UniProtKB-SubCell"/>
</dbReference>
<dbReference type="Gene3D" id="1.10.287.910">
    <property type="entry name" value="bacterial mercury transporter, merf"/>
    <property type="match status" value="1"/>
</dbReference>
<comment type="subcellular location">
    <subcellularLocation>
        <location evidence="2">Cell membrane</location>
        <topology evidence="2">Multi-pass membrane protein</topology>
    </subcellularLocation>
</comment>
<organism>
    <name type="scientific">Haemophilus influenzae (strain ATCC 51907 / DSM 11121 / KW20 / Rd)</name>
    <dbReference type="NCBI Taxonomy" id="71421"/>
    <lineage>
        <taxon>Bacteria</taxon>
        <taxon>Pseudomonadati</taxon>
        <taxon>Pseudomonadota</taxon>
        <taxon>Gammaproteobacteria</taxon>
        <taxon>Pasteurellales</taxon>
        <taxon>Pasteurellaceae</taxon>
        <taxon>Haemophilus</taxon>
    </lineage>
</organism>
<proteinExistence type="predicted"/>
<accession>Q57347</accession>
<accession>O05042</accession>
<gene>
    <name type="ordered locus">HI_1049</name>
</gene>
<protein>
    <recommendedName>
        <fullName>Uncharacterized protein HI_1049</fullName>
    </recommendedName>
</protein>
<evidence type="ECO:0000255" key="1"/>
<evidence type="ECO:0000305" key="2"/>
<name>Y1049_HAEIN</name>
<keyword id="KW-1003">Cell membrane</keyword>
<keyword id="KW-0472">Membrane</keyword>
<keyword id="KW-1185">Reference proteome</keyword>
<keyword id="KW-0812">Transmembrane</keyword>
<keyword id="KW-1133">Transmembrane helix</keyword>
<feature type="chain" id="PRO_0000077995" description="Uncharacterized protein HI_1049">
    <location>
        <begin position="1"/>
        <end position="97"/>
    </location>
</feature>
<feature type="transmembrane region" description="Helical" evidence="1">
    <location>
        <begin position="7"/>
        <end position="27"/>
    </location>
</feature>
<feature type="transmembrane region" description="Helical" evidence="1">
    <location>
        <begin position="34"/>
        <end position="54"/>
    </location>
</feature>
<feature type="transmembrane region" description="Helical" evidence="1">
    <location>
        <begin position="69"/>
        <end position="89"/>
    </location>
</feature>
<sequence>MASTLCCIAPLIYLVFGVSSTWLIGLGEYDYLRIPMLIISLCAFAYGFWLLMFSKKIICSKYISRKKLIVLYWIVFIVMIFFLTYPTILPWILELAN</sequence>
<reference key="1">
    <citation type="journal article" date="1995" name="Science">
        <title>Whole-genome random sequencing and assembly of Haemophilus influenzae Rd.</title>
        <authorList>
            <person name="Fleischmann R.D."/>
            <person name="Adams M.D."/>
            <person name="White O."/>
            <person name="Clayton R.A."/>
            <person name="Kirkness E.F."/>
            <person name="Kerlavage A.R."/>
            <person name="Bult C.J."/>
            <person name="Tomb J.-F."/>
            <person name="Dougherty B.A."/>
            <person name="Merrick J.M."/>
            <person name="McKenney K."/>
            <person name="Sutton G.G."/>
            <person name="FitzHugh W."/>
            <person name="Fields C.A."/>
            <person name="Gocayne J.D."/>
            <person name="Scott J.D."/>
            <person name="Shirley R."/>
            <person name="Liu L.-I."/>
            <person name="Glodek A."/>
            <person name="Kelley J.M."/>
            <person name="Weidman J.F."/>
            <person name="Phillips C.A."/>
            <person name="Spriggs T."/>
            <person name="Hedblom E."/>
            <person name="Cotton M.D."/>
            <person name="Utterback T.R."/>
            <person name="Hanna M.C."/>
            <person name="Nguyen D.T."/>
            <person name="Saudek D.M."/>
            <person name="Brandon R.C."/>
            <person name="Fine L.D."/>
            <person name="Fritchman J.L."/>
            <person name="Fuhrmann J.L."/>
            <person name="Geoghagen N.S.M."/>
            <person name="Gnehm C.L."/>
            <person name="McDonald L.A."/>
            <person name="Small K.V."/>
            <person name="Fraser C.M."/>
            <person name="Smith H.O."/>
            <person name="Venter J.C."/>
        </authorList>
    </citation>
    <scope>NUCLEOTIDE SEQUENCE [LARGE SCALE GENOMIC DNA]</scope>
    <source>
        <strain>ATCC 51907 / DSM 11121 / KW20 / Rd</strain>
    </source>
</reference>